<keyword id="KW-0963">Cytoplasm</keyword>
<keyword id="KW-0489">Methyltransferase</keyword>
<keyword id="KW-0698">rRNA processing</keyword>
<keyword id="KW-0949">S-adenosyl-L-methionine</keyword>
<keyword id="KW-0808">Transferase</keyword>
<evidence type="ECO:0000255" key="1">
    <source>
        <dbReference type="HAMAP-Rule" id="MF_01007"/>
    </source>
</evidence>
<evidence type="ECO:0000256" key="2">
    <source>
        <dbReference type="SAM" id="MobiDB-lite"/>
    </source>
</evidence>
<gene>
    <name evidence="1" type="primary">rsmH</name>
    <name type="synonym">mraW</name>
    <name type="ordered locus">TT_C0711</name>
</gene>
<reference key="1">
    <citation type="journal article" date="2004" name="Nat. Biotechnol.">
        <title>The genome sequence of the extreme thermophile Thermus thermophilus.</title>
        <authorList>
            <person name="Henne A."/>
            <person name="Brueggemann H."/>
            <person name="Raasch C."/>
            <person name="Wiezer A."/>
            <person name="Hartsch T."/>
            <person name="Liesegang H."/>
            <person name="Johann A."/>
            <person name="Lienard T."/>
            <person name="Gohl O."/>
            <person name="Martinez-Arias R."/>
            <person name="Jacobi C."/>
            <person name="Starkuviene V."/>
            <person name="Schlenczeck S."/>
            <person name="Dencker S."/>
            <person name="Huber R."/>
            <person name="Klenk H.-P."/>
            <person name="Kramer W."/>
            <person name="Merkl R."/>
            <person name="Gottschalk G."/>
            <person name="Fritz H.-J."/>
        </authorList>
    </citation>
    <scope>NUCLEOTIDE SEQUENCE [LARGE SCALE GENOMIC DNA]</scope>
    <source>
        <strain>ATCC BAA-163 / DSM 7039 / HB27</strain>
    </source>
</reference>
<accession>P62476</accession>
<dbReference type="EC" id="2.1.1.199" evidence="1"/>
<dbReference type="EMBL" id="AE017221">
    <property type="protein sequence ID" value="AAS81059.1"/>
    <property type="molecule type" value="Genomic_DNA"/>
</dbReference>
<dbReference type="RefSeq" id="WP_011173150.1">
    <property type="nucleotide sequence ID" value="NC_005835.1"/>
</dbReference>
<dbReference type="SMR" id="P62476"/>
<dbReference type="KEGG" id="tth:TT_C0711"/>
<dbReference type="eggNOG" id="COG0275">
    <property type="taxonomic scope" value="Bacteria"/>
</dbReference>
<dbReference type="HOGENOM" id="CLU_038422_2_0_0"/>
<dbReference type="OrthoDB" id="9806637at2"/>
<dbReference type="Proteomes" id="UP000000592">
    <property type="component" value="Chromosome"/>
</dbReference>
<dbReference type="GO" id="GO:0005737">
    <property type="term" value="C:cytoplasm"/>
    <property type="evidence" value="ECO:0007669"/>
    <property type="project" value="UniProtKB-SubCell"/>
</dbReference>
<dbReference type="GO" id="GO:0071424">
    <property type="term" value="F:rRNA (cytosine-N4-)-methyltransferase activity"/>
    <property type="evidence" value="ECO:0007669"/>
    <property type="project" value="UniProtKB-UniRule"/>
</dbReference>
<dbReference type="GO" id="GO:0070475">
    <property type="term" value="P:rRNA base methylation"/>
    <property type="evidence" value="ECO:0007669"/>
    <property type="project" value="UniProtKB-UniRule"/>
</dbReference>
<dbReference type="CDD" id="cd02440">
    <property type="entry name" value="AdoMet_MTases"/>
    <property type="match status" value="1"/>
</dbReference>
<dbReference type="Gene3D" id="1.10.150.170">
    <property type="entry name" value="Putative methyltransferase TM0872, insert domain"/>
    <property type="match status" value="1"/>
</dbReference>
<dbReference type="Gene3D" id="3.40.50.150">
    <property type="entry name" value="Vaccinia Virus protein VP39"/>
    <property type="match status" value="1"/>
</dbReference>
<dbReference type="HAMAP" id="MF_01007">
    <property type="entry name" value="16SrRNA_methyltr_H"/>
    <property type="match status" value="1"/>
</dbReference>
<dbReference type="InterPro" id="IPR002903">
    <property type="entry name" value="RsmH"/>
</dbReference>
<dbReference type="InterPro" id="IPR023397">
    <property type="entry name" value="SAM-dep_MeTrfase_MraW_recog"/>
</dbReference>
<dbReference type="InterPro" id="IPR029063">
    <property type="entry name" value="SAM-dependent_MTases_sf"/>
</dbReference>
<dbReference type="NCBIfam" id="TIGR00006">
    <property type="entry name" value="16S rRNA (cytosine(1402)-N(4))-methyltransferase RsmH"/>
    <property type="match status" value="1"/>
</dbReference>
<dbReference type="PANTHER" id="PTHR11265:SF0">
    <property type="entry name" value="12S RRNA N4-METHYLCYTIDINE METHYLTRANSFERASE"/>
    <property type="match status" value="1"/>
</dbReference>
<dbReference type="PANTHER" id="PTHR11265">
    <property type="entry name" value="S-ADENOSYL-METHYLTRANSFERASE MRAW"/>
    <property type="match status" value="1"/>
</dbReference>
<dbReference type="Pfam" id="PF01795">
    <property type="entry name" value="Methyltransf_5"/>
    <property type="match status" value="1"/>
</dbReference>
<dbReference type="PIRSF" id="PIRSF004486">
    <property type="entry name" value="MraW"/>
    <property type="match status" value="1"/>
</dbReference>
<dbReference type="SUPFAM" id="SSF81799">
    <property type="entry name" value="Putative methyltransferase TM0872, insert domain"/>
    <property type="match status" value="1"/>
</dbReference>
<dbReference type="SUPFAM" id="SSF53335">
    <property type="entry name" value="S-adenosyl-L-methionine-dependent methyltransferases"/>
    <property type="match status" value="1"/>
</dbReference>
<name>RSMH_THET2</name>
<comment type="function">
    <text evidence="1">Specifically methylates the N4 position of cytidine in position 1402 (C1402) of 16S rRNA.</text>
</comment>
<comment type="catalytic activity">
    <reaction evidence="1">
        <text>cytidine(1402) in 16S rRNA + S-adenosyl-L-methionine = N(4)-methylcytidine(1402) in 16S rRNA + S-adenosyl-L-homocysteine + H(+)</text>
        <dbReference type="Rhea" id="RHEA:42928"/>
        <dbReference type="Rhea" id="RHEA-COMP:10286"/>
        <dbReference type="Rhea" id="RHEA-COMP:10287"/>
        <dbReference type="ChEBI" id="CHEBI:15378"/>
        <dbReference type="ChEBI" id="CHEBI:57856"/>
        <dbReference type="ChEBI" id="CHEBI:59789"/>
        <dbReference type="ChEBI" id="CHEBI:74506"/>
        <dbReference type="ChEBI" id="CHEBI:82748"/>
        <dbReference type="EC" id="2.1.1.199"/>
    </reaction>
</comment>
<comment type="subcellular location">
    <subcellularLocation>
        <location evidence="1">Cytoplasm</location>
    </subcellularLocation>
</comment>
<comment type="similarity">
    <text evidence="1">Belongs to the methyltransferase superfamily. RsmH family.</text>
</comment>
<proteinExistence type="inferred from homology"/>
<feature type="chain" id="PRO_0000108733" description="Ribosomal RNA small subunit methyltransferase H">
    <location>
        <begin position="1"/>
        <end position="285"/>
    </location>
</feature>
<feature type="region of interest" description="Disordered" evidence="2">
    <location>
        <begin position="258"/>
        <end position="285"/>
    </location>
</feature>
<feature type="binding site" evidence="1">
    <location>
        <begin position="34"/>
        <end position="36"/>
    </location>
    <ligand>
        <name>S-adenosyl-L-methionine</name>
        <dbReference type="ChEBI" id="CHEBI:59789"/>
    </ligand>
</feature>
<feature type="binding site" evidence="1">
    <location>
        <position position="51"/>
    </location>
    <ligand>
        <name>S-adenosyl-L-methionine</name>
        <dbReference type="ChEBI" id="CHEBI:59789"/>
    </ligand>
</feature>
<feature type="binding site" evidence="1">
    <location>
        <position position="75"/>
    </location>
    <ligand>
        <name>S-adenosyl-L-methionine</name>
        <dbReference type="ChEBI" id="CHEBI:59789"/>
    </ligand>
</feature>
<feature type="binding site" evidence="1">
    <location>
        <position position="96"/>
    </location>
    <ligand>
        <name>S-adenosyl-L-methionine</name>
        <dbReference type="ChEBI" id="CHEBI:59789"/>
    </ligand>
</feature>
<feature type="binding site" evidence="1">
    <location>
        <position position="103"/>
    </location>
    <ligand>
        <name>S-adenosyl-L-methionine</name>
        <dbReference type="ChEBI" id="CHEBI:59789"/>
    </ligand>
</feature>
<organism>
    <name type="scientific">Thermus thermophilus (strain ATCC BAA-163 / DSM 7039 / HB27)</name>
    <dbReference type="NCBI Taxonomy" id="262724"/>
    <lineage>
        <taxon>Bacteria</taxon>
        <taxon>Thermotogati</taxon>
        <taxon>Deinococcota</taxon>
        <taxon>Deinococci</taxon>
        <taxon>Thermales</taxon>
        <taxon>Thermaceae</taxon>
        <taxon>Thermus</taxon>
    </lineage>
</organism>
<protein>
    <recommendedName>
        <fullName evidence="1">Ribosomal RNA small subunit methyltransferase H</fullName>
        <ecNumber evidence="1">2.1.1.199</ecNumber>
    </recommendedName>
    <alternativeName>
        <fullName evidence="1">16S rRNA m(4)C1402 methyltransferase</fullName>
    </alternativeName>
    <alternativeName>
        <fullName evidence="1">rRNA (cytosine-N(4)-)-methyltransferase RsmH</fullName>
    </alternativeName>
</protein>
<sequence>MRPMTHVPVLYQEALDLLAVRPGGVYVDATLGGAGHARGILERGGRVIGLDQDPEAVARAKGLHLPGLTVVQGNFRHLKRHLAALGVERVDGILADLGVSSFHLDDPSRGFSYQKEGPLDMRMGLEGPTAKEVVNRLPLEALARLLRELGEEPQAYRIARAIVAAREKAPIETTTQLAEIVRKAVGFRRAGHPARKTFQALRIYVNDELNALKEFLEQAAEVLAPRGRLVVIAFHSLEDRVVKRFLRESGLKVLTKKPLVPSEKEAAQNPRARSAKLRAAEKEAP</sequence>